<name>PER61_ARATH</name>
<sequence length="340" mass="37312">MQFVNFFPLLALVVISLAGKATVEAATGLNPPVKLVWHYYKLTNTCDDAETYIRYQVEKFYKNDSSIAPKLLRLLYSDCMVNGCDGSILLQGPNSERTAPQNRGLGGFVIIDKIKQVLESRCPGVVSCADILNLATRDAVHMAGAPSYPVFTGRRDGGTLNADAVDLPSPSISVDESLAYFKSKGLDVLDMTTLLGAHSMGKTHCSYVVDRLYNFKNTGKPDPTMNTTLVSQLRYLCPPRTQKGQTDPLVYLNPDSGSSNRFTSSYYSRVLSHNAVLRVDQELLNNDDSKEITQEFASGFEDFRKSFALAMSRMGSINVLTGTAGEIRRDCRVTNANDGA</sequence>
<feature type="signal peptide" evidence="2">
    <location>
        <begin position="1"/>
        <end position="25"/>
    </location>
</feature>
<feature type="chain" id="PRO_0000023726" description="Probable peroxidase 61">
    <location>
        <begin position="26"/>
        <end position="340"/>
    </location>
</feature>
<feature type="active site" evidence="1">
    <location>
        <position position="73"/>
    </location>
</feature>
<feature type="binding site" evidence="3">
    <location>
        <position position="78"/>
    </location>
    <ligand>
        <name>Ca(2+)</name>
        <dbReference type="ChEBI" id="CHEBI:29108"/>
        <label>1</label>
    </ligand>
</feature>
<feature type="binding site" evidence="3">
    <location>
        <position position="81"/>
    </location>
    <ligand>
        <name>Ca(2+)</name>
        <dbReference type="ChEBI" id="CHEBI:29108"/>
        <label>1</label>
    </ligand>
</feature>
<feature type="binding site" evidence="3">
    <location>
        <position position="83"/>
    </location>
    <ligand>
        <name>Ca(2+)</name>
        <dbReference type="ChEBI" id="CHEBI:29108"/>
        <label>1</label>
    </ligand>
</feature>
<feature type="binding site" evidence="3">
    <location>
        <position position="85"/>
    </location>
    <ligand>
        <name>Ca(2+)</name>
        <dbReference type="ChEBI" id="CHEBI:29108"/>
        <label>1</label>
    </ligand>
</feature>
<feature type="binding site" evidence="3">
    <location>
        <position position="87"/>
    </location>
    <ligand>
        <name>Ca(2+)</name>
        <dbReference type="ChEBI" id="CHEBI:29108"/>
        <label>1</label>
    </ligand>
</feature>
<feature type="binding site" evidence="3">
    <location>
        <position position="168"/>
    </location>
    <ligand>
        <name>substrate</name>
    </ligand>
</feature>
<feature type="binding site" description="axial binding residue" evidence="3">
    <location>
        <position position="198"/>
    </location>
    <ligand>
        <name>heme b</name>
        <dbReference type="ChEBI" id="CHEBI:60344"/>
    </ligand>
    <ligandPart>
        <name>Fe</name>
        <dbReference type="ChEBI" id="CHEBI:18248"/>
    </ligandPart>
</feature>
<feature type="binding site" evidence="3">
    <location>
        <position position="199"/>
    </location>
    <ligand>
        <name>Ca(2+)</name>
        <dbReference type="ChEBI" id="CHEBI:29108"/>
        <label>2</label>
    </ligand>
</feature>
<feature type="binding site" evidence="3">
    <location>
        <position position="255"/>
    </location>
    <ligand>
        <name>Ca(2+)</name>
        <dbReference type="ChEBI" id="CHEBI:29108"/>
        <label>2</label>
    </ligand>
</feature>
<feature type="binding site" evidence="3">
    <location>
        <position position="258"/>
    </location>
    <ligand>
        <name>Ca(2+)</name>
        <dbReference type="ChEBI" id="CHEBI:29108"/>
        <label>2</label>
    </ligand>
</feature>
<feature type="glycosylation site" description="N-linked (GlcNAc...) asparagine" evidence="2">
    <location>
        <position position="63"/>
    </location>
</feature>
<feature type="glycosylation site" description="N-linked (GlcNAc...) asparagine" evidence="2">
    <location>
        <position position="226"/>
    </location>
</feature>
<feature type="disulfide bond" evidence="3">
    <location>
        <begin position="46"/>
        <end position="122"/>
    </location>
</feature>
<feature type="disulfide bond" evidence="3">
    <location>
        <begin position="79"/>
        <end position="84"/>
    </location>
</feature>
<feature type="disulfide bond" evidence="3">
    <location>
        <begin position="128"/>
        <end position="331"/>
    </location>
</feature>
<feature type="disulfide bond" evidence="3">
    <location>
        <begin position="205"/>
        <end position="237"/>
    </location>
</feature>
<reference key="1">
    <citation type="journal article" date="1998" name="DNA Res.">
        <title>Structural analysis of Arabidopsis thaliana chromosome 5. IV. Sequence features of the regions of 1,456,315 bp covered by nineteen physically assigned P1 and TAC clones.</title>
        <authorList>
            <person name="Sato S."/>
            <person name="Kaneko T."/>
            <person name="Kotani H."/>
            <person name="Nakamura Y."/>
            <person name="Asamizu E."/>
            <person name="Miyajima N."/>
            <person name="Tabata S."/>
        </authorList>
    </citation>
    <scope>NUCLEOTIDE SEQUENCE [LARGE SCALE GENOMIC DNA]</scope>
    <source>
        <strain>cv. Columbia</strain>
    </source>
</reference>
<reference key="2">
    <citation type="journal article" date="2017" name="Plant J.">
        <title>Araport11: a complete reannotation of the Arabidopsis thaliana reference genome.</title>
        <authorList>
            <person name="Cheng C.Y."/>
            <person name="Krishnakumar V."/>
            <person name="Chan A.P."/>
            <person name="Thibaud-Nissen F."/>
            <person name="Schobel S."/>
            <person name="Town C.D."/>
        </authorList>
    </citation>
    <scope>GENOME REANNOTATION</scope>
    <source>
        <strain>cv. Columbia</strain>
    </source>
</reference>
<reference key="3">
    <citation type="journal article" date="2002" name="Gene">
        <title>Analysis and expression of the class III peroxidase large gene family in Arabidopsis thaliana.</title>
        <authorList>
            <person name="Tognolli M."/>
            <person name="Penel C."/>
            <person name="Greppin H."/>
            <person name="Simon P."/>
        </authorList>
    </citation>
    <scope>GENE FAMILY ORGANIZATION</scope>
    <scope>NOMENCLATURE</scope>
    <source>
        <strain>cv. Columbia</strain>
    </source>
</reference>
<protein>
    <recommendedName>
        <fullName>Probable peroxidase 61</fullName>
        <shortName>Atperox P61</shortName>
        <ecNumber>1.11.1.7</ecNumber>
    </recommendedName>
</protein>
<organism>
    <name type="scientific">Arabidopsis thaliana</name>
    <name type="common">Mouse-ear cress</name>
    <dbReference type="NCBI Taxonomy" id="3702"/>
    <lineage>
        <taxon>Eukaryota</taxon>
        <taxon>Viridiplantae</taxon>
        <taxon>Streptophyta</taxon>
        <taxon>Embryophyta</taxon>
        <taxon>Tracheophyta</taxon>
        <taxon>Spermatophyta</taxon>
        <taxon>Magnoliopsida</taxon>
        <taxon>eudicotyledons</taxon>
        <taxon>Gunneridae</taxon>
        <taxon>Pentapetalae</taxon>
        <taxon>rosids</taxon>
        <taxon>malvids</taxon>
        <taxon>Brassicales</taxon>
        <taxon>Brassicaceae</taxon>
        <taxon>Camelineae</taxon>
        <taxon>Arabidopsis</taxon>
    </lineage>
</organism>
<keyword id="KW-0106">Calcium</keyword>
<keyword id="KW-1015">Disulfide bond</keyword>
<keyword id="KW-0325">Glycoprotein</keyword>
<keyword id="KW-0349">Heme</keyword>
<keyword id="KW-0376">Hydrogen peroxide</keyword>
<keyword id="KW-0408">Iron</keyword>
<keyword id="KW-0479">Metal-binding</keyword>
<keyword id="KW-0560">Oxidoreductase</keyword>
<keyword id="KW-0575">Peroxidase</keyword>
<keyword id="KW-1185">Reference proteome</keyword>
<keyword id="KW-0964">Secreted</keyword>
<keyword id="KW-0732">Signal</keyword>
<dbReference type="EC" id="1.11.1.7"/>
<dbReference type="EMBL" id="AB009056">
    <property type="protein sequence ID" value="BAB08730.1"/>
    <property type="molecule type" value="Genomic_DNA"/>
</dbReference>
<dbReference type="EMBL" id="CP002688">
    <property type="protein sequence ID" value="AED93253.1"/>
    <property type="molecule type" value="Genomic_DNA"/>
</dbReference>
<dbReference type="RefSeq" id="NP_197795.1">
    <property type="nucleotide sequence ID" value="NM_122312.2"/>
</dbReference>
<dbReference type="SMR" id="Q9FLV5"/>
<dbReference type="FunCoup" id="Q9FLV5">
    <property type="interactions" value="328"/>
</dbReference>
<dbReference type="STRING" id="3702.Q9FLV5"/>
<dbReference type="PeroxiBase" id="227">
    <property type="entry name" value="AtPrx61"/>
</dbReference>
<dbReference type="GlyCosmos" id="Q9FLV5">
    <property type="glycosylation" value="2 sites, No reported glycans"/>
</dbReference>
<dbReference type="GlyGen" id="Q9FLV5">
    <property type="glycosylation" value="2 sites"/>
</dbReference>
<dbReference type="PaxDb" id="3702-AT5G24070.1"/>
<dbReference type="ProteomicsDB" id="236411"/>
<dbReference type="EnsemblPlants" id="AT5G24070.1">
    <property type="protein sequence ID" value="AT5G24070.1"/>
    <property type="gene ID" value="AT5G24070"/>
</dbReference>
<dbReference type="GeneID" id="832472"/>
<dbReference type="Gramene" id="AT5G24070.1">
    <property type="protein sequence ID" value="AT5G24070.1"/>
    <property type="gene ID" value="AT5G24070"/>
</dbReference>
<dbReference type="KEGG" id="ath:AT5G24070"/>
<dbReference type="Araport" id="AT5G24070"/>
<dbReference type="TAIR" id="AT5G24070"/>
<dbReference type="eggNOG" id="ENOG502QRTQ">
    <property type="taxonomic scope" value="Eukaryota"/>
</dbReference>
<dbReference type="HOGENOM" id="CLU_010543_0_3_1"/>
<dbReference type="InParanoid" id="Q9FLV5"/>
<dbReference type="OMA" id="NCRFTNK"/>
<dbReference type="OrthoDB" id="2113341at2759"/>
<dbReference type="PhylomeDB" id="Q9FLV5"/>
<dbReference type="BioCyc" id="ARA:AT5G24070-MONOMER"/>
<dbReference type="PRO" id="PR:Q9FLV5"/>
<dbReference type="Proteomes" id="UP000006548">
    <property type="component" value="Chromosome 5"/>
</dbReference>
<dbReference type="ExpressionAtlas" id="Q9FLV5">
    <property type="expression patterns" value="baseline and differential"/>
</dbReference>
<dbReference type="GO" id="GO:0005576">
    <property type="term" value="C:extracellular region"/>
    <property type="evidence" value="ECO:0007669"/>
    <property type="project" value="UniProtKB-SubCell"/>
</dbReference>
<dbReference type="GO" id="GO:0020037">
    <property type="term" value="F:heme binding"/>
    <property type="evidence" value="ECO:0007669"/>
    <property type="project" value="InterPro"/>
</dbReference>
<dbReference type="GO" id="GO:0140825">
    <property type="term" value="F:lactoperoxidase activity"/>
    <property type="evidence" value="ECO:0007669"/>
    <property type="project" value="UniProtKB-EC"/>
</dbReference>
<dbReference type="GO" id="GO:0046872">
    <property type="term" value="F:metal ion binding"/>
    <property type="evidence" value="ECO:0007669"/>
    <property type="project" value="UniProtKB-KW"/>
</dbReference>
<dbReference type="GO" id="GO:0042744">
    <property type="term" value="P:hydrogen peroxide catabolic process"/>
    <property type="evidence" value="ECO:0007669"/>
    <property type="project" value="UniProtKB-KW"/>
</dbReference>
<dbReference type="GO" id="GO:0006979">
    <property type="term" value="P:response to oxidative stress"/>
    <property type="evidence" value="ECO:0007669"/>
    <property type="project" value="InterPro"/>
</dbReference>
<dbReference type="CDD" id="cd00693">
    <property type="entry name" value="secretory_peroxidase"/>
    <property type="match status" value="1"/>
</dbReference>
<dbReference type="FunFam" id="1.10.420.10:FF:000007">
    <property type="entry name" value="Peroxidase"/>
    <property type="match status" value="1"/>
</dbReference>
<dbReference type="Gene3D" id="1.10.520.10">
    <property type="match status" value="1"/>
</dbReference>
<dbReference type="Gene3D" id="1.10.420.10">
    <property type="entry name" value="Peroxidase, domain 2"/>
    <property type="match status" value="1"/>
</dbReference>
<dbReference type="InterPro" id="IPR002016">
    <property type="entry name" value="Haem_peroxidase"/>
</dbReference>
<dbReference type="InterPro" id="IPR010255">
    <property type="entry name" value="Haem_peroxidase_sf"/>
</dbReference>
<dbReference type="InterPro" id="IPR000823">
    <property type="entry name" value="Peroxidase_pln"/>
</dbReference>
<dbReference type="InterPro" id="IPR019793">
    <property type="entry name" value="Peroxidases_heam-ligand_BS"/>
</dbReference>
<dbReference type="InterPro" id="IPR033905">
    <property type="entry name" value="Secretory_peroxidase"/>
</dbReference>
<dbReference type="PANTHER" id="PTHR31517">
    <property type="match status" value="1"/>
</dbReference>
<dbReference type="PANTHER" id="PTHR31517:SF84">
    <property type="entry name" value="PEROXIDASE"/>
    <property type="match status" value="1"/>
</dbReference>
<dbReference type="Pfam" id="PF00141">
    <property type="entry name" value="peroxidase"/>
    <property type="match status" value="1"/>
</dbReference>
<dbReference type="PRINTS" id="PR00458">
    <property type="entry name" value="PEROXIDASE"/>
</dbReference>
<dbReference type="PRINTS" id="PR00461">
    <property type="entry name" value="PLPEROXIDASE"/>
</dbReference>
<dbReference type="SUPFAM" id="SSF48113">
    <property type="entry name" value="Heme-dependent peroxidases"/>
    <property type="match status" value="1"/>
</dbReference>
<dbReference type="PROSITE" id="PS00435">
    <property type="entry name" value="PEROXIDASE_1"/>
    <property type="match status" value="1"/>
</dbReference>
<dbReference type="PROSITE" id="PS50873">
    <property type="entry name" value="PEROXIDASE_4"/>
    <property type="match status" value="1"/>
</dbReference>
<proteinExistence type="inferred from homology"/>
<evidence type="ECO:0000250" key="1"/>
<evidence type="ECO:0000255" key="2"/>
<evidence type="ECO:0000255" key="3">
    <source>
        <dbReference type="PROSITE-ProRule" id="PRU00297"/>
    </source>
</evidence>
<evidence type="ECO:0000305" key="4"/>
<comment type="function">
    <text evidence="4">Removal of H(2)O(2), oxidation of toxic reductants, biosynthesis and degradation of lignin, suberization, auxin catabolism, response to environmental stresses such as wounding, pathogen attack and oxidative stress (Probable). The enzyme activity has to be proved.</text>
</comment>
<comment type="catalytic activity">
    <reaction>
        <text>2 a phenolic donor + H2O2 = 2 a phenolic radical donor + 2 H2O</text>
        <dbReference type="Rhea" id="RHEA:56136"/>
        <dbReference type="ChEBI" id="CHEBI:15377"/>
        <dbReference type="ChEBI" id="CHEBI:16240"/>
        <dbReference type="ChEBI" id="CHEBI:139520"/>
        <dbReference type="ChEBI" id="CHEBI:139521"/>
        <dbReference type="EC" id="1.11.1.7"/>
    </reaction>
</comment>
<comment type="cofactor">
    <cofactor evidence="3">
        <name>heme b</name>
        <dbReference type="ChEBI" id="CHEBI:60344"/>
    </cofactor>
    <text evidence="3">Binds 1 heme b (iron(II)-protoporphyrin IX) group per subunit.</text>
</comment>
<comment type="cofactor">
    <cofactor evidence="3">
        <name>Ca(2+)</name>
        <dbReference type="ChEBI" id="CHEBI:29108"/>
    </cofactor>
    <text evidence="3">Binds 2 calcium ions per subunit.</text>
</comment>
<comment type="subcellular location">
    <subcellularLocation>
        <location evidence="3">Secreted</location>
    </subcellularLocation>
</comment>
<comment type="miscellaneous">
    <text>There are 73 peroxidase genes in A.thaliana.</text>
</comment>
<comment type="similarity">
    <text evidence="3">Belongs to the peroxidase family. Classical plant (class III) peroxidase subfamily.</text>
</comment>
<comment type="caution">
    <text evidence="4">Lacks the distal histidine (here Ser-77), present in the active site, which is one of the conserved features of the classical plant (class III) peroxidase family.</text>
</comment>
<accession>Q9FLV5</accession>
<gene>
    <name type="primary">PER61</name>
    <name type="synonym">P61</name>
    <name type="ordered locus">At5g24070</name>
    <name type="ORF">MZF18.4</name>
</gene>